<organism>
    <name type="scientific">Bacillus cytotoxicus (strain DSM 22905 / CIP 110041 / 391-98 / NVH 391-98)</name>
    <dbReference type="NCBI Taxonomy" id="315749"/>
    <lineage>
        <taxon>Bacteria</taxon>
        <taxon>Bacillati</taxon>
        <taxon>Bacillota</taxon>
        <taxon>Bacilli</taxon>
        <taxon>Bacillales</taxon>
        <taxon>Bacillaceae</taxon>
        <taxon>Bacillus</taxon>
        <taxon>Bacillus cereus group</taxon>
    </lineage>
</organism>
<dbReference type="EMBL" id="CP000764">
    <property type="protein sequence ID" value="ABS22628.1"/>
    <property type="molecule type" value="Genomic_DNA"/>
</dbReference>
<dbReference type="RefSeq" id="WP_012094825.1">
    <property type="nucleotide sequence ID" value="NC_009674.1"/>
</dbReference>
<dbReference type="SMR" id="A7GR70"/>
<dbReference type="STRING" id="315749.Bcer98_2390"/>
<dbReference type="GeneID" id="33897649"/>
<dbReference type="KEGG" id="bcy:Bcer98_2390"/>
<dbReference type="eggNOG" id="COG1923">
    <property type="taxonomic scope" value="Bacteria"/>
</dbReference>
<dbReference type="HOGENOM" id="CLU_113688_3_0_9"/>
<dbReference type="OrthoDB" id="9799751at2"/>
<dbReference type="Proteomes" id="UP000002300">
    <property type="component" value="Chromosome"/>
</dbReference>
<dbReference type="GO" id="GO:0005829">
    <property type="term" value="C:cytosol"/>
    <property type="evidence" value="ECO:0007669"/>
    <property type="project" value="TreeGrafter"/>
</dbReference>
<dbReference type="GO" id="GO:0003723">
    <property type="term" value="F:RNA binding"/>
    <property type="evidence" value="ECO:0007669"/>
    <property type="project" value="UniProtKB-UniRule"/>
</dbReference>
<dbReference type="GO" id="GO:0006355">
    <property type="term" value="P:regulation of DNA-templated transcription"/>
    <property type="evidence" value="ECO:0007669"/>
    <property type="project" value="InterPro"/>
</dbReference>
<dbReference type="GO" id="GO:0043487">
    <property type="term" value="P:regulation of RNA stability"/>
    <property type="evidence" value="ECO:0007669"/>
    <property type="project" value="TreeGrafter"/>
</dbReference>
<dbReference type="GO" id="GO:0045974">
    <property type="term" value="P:regulation of translation, ncRNA-mediated"/>
    <property type="evidence" value="ECO:0007669"/>
    <property type="project" value="TreeGrafter"/>
</dbReference>
<dbReference type="CDD" id="cd01716">
    <property type="entry name" value="Hfq"/>
    <property type="match status" value="1"/>
</dbReference>
<dbReference type="FunFam" id="2.30.30.100:FF:000012">
    <property type="entry name" value="RNA-binding protein Hfq"/>
    <property type="match status" value="1"/>
</dbReference>
<dbReference type="Gene3D" id="2.30.30.100">
    <property type="match status" value="1"/>
</dbReference>
<dbReference type="HAMAP" id="MF_00436">
    <property type="entry name" value="Hfq"/>
    <property type="match status" value="1"/>
</dbReference>
<dbReference type="InterPro" id="IPR005001">
    <property type="entry name" value="Hfq"/>
</dbReference>
<dbReference type="InterPro" id="IPR010920">
    <property type="entry name" value="LSM_dom_sf"/>
</dbReference>
<dbReference type="InterPro" id="IPR047575">
    <property type="entry name" value="Sm"/>
</dbReference>
<dbReference type="NCBIfam" id="TIGR02383">
    <property type="entry name" value="Hfq"/>
    <property type="match status" value="1"/>
</dbReference>
<dbReference type="NCBIfam" id="NF001602">
    <property type="entry name" value="PRK00395.1"/>
    <property type="match status" value="1"/>
</dbReference>
<dbReference type="PANTHER" id="PTHR34772">
    <property type="entry name" value="RNA-BINDING PROTEIN HFQ"/>
    <property type="match status" value="1"/>
</dbReference>
<dbReference type="PANTHER" id="PTHR34772:SF1">
    <property type="entry name" value="RNA-BINDING PROTEIN HFQ"/>
    <property type="match status" value="1"/>
</dbReference>
<dbReference type="Pfam" id="PF17209">
    <property type="entry name" value="Hfq"/>
    <property type="match status" value="1"/>
</dbReference>
<dbReference type="SUPFAM" id="SSF50182">
    <property type="entry name" value="Sm-like ribonucleoproteins"/>
    <property type="match status" value="1"/>
</dbReference>
<dbReference type="PROSITE" id="PS52002">
    <property type="entry name" value="SM"/>
    <property type="match status" value="1"/>
</dbReference>
<gene>
    <name evidence="1" type="primary">hfq</name>
    <name type="ordered locus">Bcer98_2390</name>
</gene>
<reference key="1">
    <citation type="journal article" date="2008" name="Chem. Biol. Interact.">
        <title>Extending the Bacillus cereus group genomics to putative food-borne pathogens of different toxicity.</title>
        <authorList>
            <person name="Lapidus A."/>
            <person name="Goltsman E."/>
            <person name="Auger S."/>
            <person name="Galleron N."/>
            <person name="Segurens B."/>
            <person name="Dossat C."/>
            <person name="Land M.L."/>
            <person name="Broussolle V."/>
            <person name="Brillard J."/>
            <person name="Guinebretiere M.-H."/>
            <person name="Sanchis V."/>
            <person name="Nguen-the C."/>
            <person name="Lereclus D."/>
            <person name="Richardson P."/>
            <person name="Wincker P."/>
            <person name="Weissenbach J."/>
            <person name="Ehrlich S.D."/>
            <person name="Sorokin A."/>
        </authorList>
    </citation>
    <scope>NUCLEOTIDE SEQUENCE [LARGE SCALE GENOMIC DNA]</scope>
    <source>
        <strain>DSM 22905 / CIP 110041 / 391-98 / NVH 391-98</strain>
    </source>
</reference>
<name>HFQ_BACCN</name>
<sequence>MKQSINIQDQFLNQLRKENTFVTLYLLNGFQLRGLIKGFDNFTVLLETEGKQQLIYKHAISTFMPQKNVAIELE</sequence>
<protein>
    <recommendedName>
        <fullName evidence="1">RNA-binding protein Hfq</fullName>
    </recommendedName>
</protein>
<evidence type="ECO:0000255" key="1">
    <source>
        <dbReference type="HAMAP-Rule" id="MF_00436"/>
    </source>
</evidence>
<evidence type="ECO:0000255" key="2">
    <source>
        <dbReference type="PROSITE-ProRule" id="PRU01346"/>
    </source>
</evidence>
<keyword id="KW-0694">RNA-binding</keyword>
<keyword id="KW-0346">Stress response</keyword>
<comment type="function">
    <text evidence="1">RNA chaperone that binds small regulatory RNA (sRNAs) and mRNAs to facilitate mRNA translational regulation in response to envelope stress, environmental stress and changes in metabolite concentrations. Also binds with high specificity to tRNAs.</text>
</comment>
<comment type="subunit">
    <text evidence="1">Homohexamer.</text>
</comment>
<comment type="similarity">
    <text evidence="1">Belongs to the Hfq family.</text>
</comment>
<proteinExistence type="inferred from homology"/>
<feature type="chain" id="PRO_1000080651" description="RNA-binding protein Hfq">
    <location>
        <begin position="1"/>
        <end position="74"/>
    </location>
</feature>
<feature type="domain" description="Sm" evidence="2">
    <location>
        <begin position="9"/>
        <end position="69"/>
    </location>
</feature>
<accession>A7GR70</accession>